<reference key="1">
    <citation type="journal article" date="1998" name="Science">
        <title>Genome sequence of the nematode C. elegans: a platform for investigating biology.</title>
        <authorList>
            <consortium name="The C. elegans sequencing consortium"/>
        </authorList>
    </citation>
    <scope>NUCLEOTIDE SEQUENCE [LARGE SCALE GENOMIC DNA]</scope>
    <source>
        <strain>Bristol N2</strain>
    </source>
</reference>
<keyword id="KW-0256">Endoplasmic reticulum</keyword>
<keyword id="KW-0328">Glycosyltransferase</keyword>
<keyword id="KW-0472">Membrane</keyword>
<keyword id="KW-1185">Reference proteome</keyword>
<keyword id="KW-0808">Transferase</keyword>
<keyword id="KW-0812">Transmembrane</keyword>
<keyword id="KW-1133">Transmembrane helix</keyword>
<sequence>MSDTVISLISHSITTVFYLVPLIIALIIPFSLYSGFRRKSKTVAFFHPYCNAGGGGERVLWAAIRTMQKKFPDHKYFVYSGDTDATKEQILLKARQRFGIELDPSNIQFIYLHWRTLVEARHYKHCTMLFQALAGLILALEAWFRMVPAVFIDSMGYPLSLPAFRLSGSKVVAYVHYPTISCDMLDVVESRQETFNNSSTIAQSNVLSWGKLTYYRLFACLYWLAGKAAHVGMVNGSWTQRHITSIWSRRDVSIVYPPCDVEAFLNIESVAESLLEDTKTVRLLSVGQIRPEKNHKLQLEVLHDVKEPLEKMGYNVELCIAGGCRNEEDQERVKMLKNEAEKLDISEQLIWQLNVPYEDLVVELSKALISIHTMHNEHFGISVVEAMAASTIILSNDSGGPRMDIVKDYEGHCVGYLSITKEEYVETILKIVEEGLKKRNDTRKYARKSLTRFGEAAFETHWNKEIEKVL</sequence>
<accession>P53993</accession>
<protein>
    <recommendedName>
        <fullName evidence="2">GDP-Man:Man(3)GlcNAc(2)-PP-Dol alpha-1,2-mannosyltransferase</fullName>
        <ecNumber evidence="2">2.4.1.131</ecNumber>
    </recommendedName>
    <alternativeName>
        <fullName evidence="5">Asparagine-linked glycosylation protein 11 homolog</fullName>
    </alternativeName>
</protein>
<proteinExistence type="inferred from homology"/>
<name>ALG11_CAEEL</name>
<evidence type="ECO:0000250" key="1">
    <source>
        <dbReference type="UniProtKB" id="P53954"/>
    </source>
</evidence>
<evidence type="ECO:0000250" key="2">
    <source>
        <dbReference type="UniProtKB" id="Q2TAA5"/>
    </source>
</evidence>
<evidence type="ECO:0000255" key="3"/>
<evidence type="ECO:0000305" key="4"/>
<evidence type="ECO:0000312" key="5">
    <source>
        <dbReference type="WormBase" id="B0361.8"/>
    </source>
</evidence>
<feature type="chain" id="PRO_0000080281" description="GDP-Man:Man(3)GlcNAc(2)-PP-Dol alpha-1,2-mannosyltransferase" evidence="4">
    <location>
        <begin position="1"/>
        <end position="470"/>
    </location>
</feature>
<feature type="topological domain" description="Lumenal" evidence="1">
    <location>
        <begin position="1"/>
        <end position="15"/>
    </location>
</feature>
<feature type="transmembrane region" description="Helical" evidence="3">
    <location>
        <begin position="16"/>
        <end position="36"/>
    </location>
</feature>
<feature type="topological domain" description="Cytoplasmic" evidence="1">
    <location>
        <begin position="37"/>
        <end position="131"/>
    </location>
</feature>
<feature type="intramembrane region" description="Helical" evidence="3">
    <location>
        <begin position="132"/>
        <end position="152"/>
    </location>
</feature>
<feature type="topological domain" description="Cytoplasmic" evidence="1">
    <location>
        <begin position="153"/>
        <end position="378"/>
    </location>
</feature>
<feature type="intramembrane region" description="Helical" evidence="3">
    <location>
        <begin position="379"/>
        <end position="399"/>
    </location>
</feature>
<feature type="topological domain" description="Cytoplasmic" evidence="1">
    <location>
        <begin position="400"/>
        <end position="470"/>
    </location>
</feature>
<organism>
    <name type="scientific">Caenorhabditis elegans</name>
    <dbReference type="NCBI Taxonomy" id="6239"/>
    <lineage>
        <taxon>Eukaryota</taxon>
        <taxon>Metazoa</taxon>
        <taxon>Ecdysozoa</taxon>
        <taxon>Nematoda</taxon>
        <taxon>Chromadorea</taxon>
        <taxon>Rhabditida</taxon>
        <taxon>Rhabditina</taxon>
        <taxon>Rhabditomorpha</taxon>
        <taxon>Rhabditoidea</taxon>
        <taxon>Rhabditidae</taxon>
        <taxon>Peloderinae</taxon>
        <taxon>Caenorhabditis</taxon>
    </lineage>
</organism>
<gene>
    <name evidence="5" type="primary">algn-11</name>
    <name evidence="5" type="ORF">B0361.8</name>
</gene>
<dbReference type="EC" id="2.4.1.131" evidence="2"/>
<dbReference type="EMBL" id="FO080185">
    <property type="protein sequence ID" value="CCD61823.1"/>
    <property type="molecule type" value="Genomic_DNA"/>
</dbReference>
<dbReference type="RefSeq" id="NP_498606.1">
    <property type="nucleotide sequence ID" value="NM_066205.7"/>
</dbReference>
<dbReference type="SMR" id="P53993"/>
<dbReference type="FunCoup" id="P53993">
    <property type="interactions" value="2970"/>
</dbReference>
<dbReference type="STRING" id="6239.B0361.8.1"/>
<dbReference type="CAZy" id="GT4">
    <property type="family name" value="Glycosyltransferase Family 4"/>
</dbReference>
<dbReference type="PaxDb" id="6239-B0361.8"/>
<dbReference type="PeptideAtlas" id="P53993"/>
<dbReference type="EnsemblMetazoa" id="B0361.8.1">
    <property type="protein sequence ID" value="B0361.8.1"/>
    <property type="gene ID" value="WBGene00015162"/>
</dbReference>
<dbReference type="GeneID" id="176032"/>
<dbReference type="KEGG" id="cel:CELE_B0361.8"/>
<dbReference type="UCSC" id="B0361.8.1">
    <property type="organism name" value="c. elegans"/>
</dbReference>
<dbReference type="AGR" id="WB:WBGene00015162"/>
<dbReference type="CTD" id="176032"/>
<dbReference type="WormBase" id="B0361.8">
    <property type="protein sequence ID" value="CE26792"/>
    <property type="gene ID" value="WBGene00015162"/>
    <property type="gene designation" value="algn-11"/>
</dbReference>
<dbReference type="eggNOG" id="KOG1387">
    <property type="taxonomic scope" value="Eukaryota"/>
</dbReference>
<dbReference type="GeneTree" id="ENSGT00550000075118"/>
<dbReference type="HOGENOM" id="CLU_017896_1_1_1"/>
<dbReference type="InParanoid" id="P53993"/>
<dbReference type="OMA" id="ARLYGWV"/>
<dbReference type="OrthoDB" id="2276068at2759"/>
<dbReference type="PhylomeDB" id="P53993"/>
<dbReference type="UniPathway" id="UPA00378"/>
<dbReference type="PRO" id="PR:P53993"/>
<dbReference type="Proteomes" id="UP000001940">
    <property type="component" value="Chromosome III"/>
</dbReference>
<dbReference type="Bgee" id="WBGene00015162">
    <property type="expression patterns" value="Expressed in germ line (C elegans) and 4 other cell types or tissues"/>
</dbReference>
<dbReference type="GO" id="GO:0005789">
    <property type="term" value="C:endoplasmic reticulum membrane"/>
    <property type="evidence" value="ECO:0000250"/>
    <property type="project" value="UniProtKB"/>
</dbReference>
<dbReference type="GO" id="GO:0004377">
    <property type="term" value="F:GDP-Man:Man3GlcNAc2-PP-Dol alpha-1,2-mannosyltransferase activity"/>
    <property type="evidence" value="ECO:0000250"/>
    <property type="project" value="UniProtKB"/>
</dbReference>
<dbReference type="GO" id="GO:0006488">
    <property type="term" value="P:dolichol-linked oligosaccharide biosynthetic process"/>
    <property type="evidence" value="ECO:0000250"/>
    <property type="project" value="UniProtKB"/>
</dbReference>
<dbReference type="GO" id="GO:0006487">
    <property type="term" value="P:protein N-linked glycosylation"/>
    <property type="evidence" value="ECO:0000250"/>
    <property type="project" value="UniProtKB"/>
</dbReference>
<dbReference type="CDD" id="cd03806">
    <property type="entry name" value="GT4_ALG11-like"/>
    <property type="match status" value="1"/>
</dbReference>
<dbReference type="Gene3D" id="3.40.50.2000">
    <property type="entry name" value="Glycogen Phosphorylase B"/>
    <property type="match status" value="1"/>
</dbReference>
<dbReference type="InterPro" id="IPR038013">
    <property type="entry name" value="ALG11"/>
</dbReference>
<dbReference type="InterPro" id="IPR031814">
    <property type="entry name" value="ALG11_N"/>
</dbReference>
<dbReference type="InterPro" id="IPR001296">
    <property type="entry name" value="Glyco_trans_1"/>
</dbReference>
<dbReference type="PANTHER" id="PTHR45919">
    <property type="entry name" value="GDP-MAN:MAN(3)GLCNAC(2)-PP-DOL ALPHA-1,2-MANNOSYLTRANSFERASE"/>
    <property type="match status" value="1"/>
</dbReference>
<dbReference type="PANTHER" id="PTHR45919:SF1">
    <property type="entry name" value="GDP-MAN:MAN(3)GLCNAC(2)-PP-DOL ALPHA-1,2-MANNOSYLTRANSFERASE"/>
    <property type="match status" value="1"/>
</dbReference>
<dbReference type="Pfam" id="PF15924">
    <property type="entry name" value="ALG11_N"/>
    <property type="match status" value="1"/>
</dbReference>
<dbReference type="Pfam" id="PF00534">
    <property type="entry name" value="Glycos_transf_1"/>
    <property type="match status" value="1"/>
</dbReference>
<dbReference type="SUPFAM" id="SSF53756">
    <property type="entry name" value="UDP-Glycosyltransferase/glycogen phosphorylase"/>
    <property type="match status" value="1"/>
</dbReference>
<comment type="function">
    <text evidence="2">GDP-Man:Man(3)GlcNAc(2)-PP-Dol alpha-1,2-mannosyltransferase that operates in the biosynthetic pathway of dolichol-linked oligosaccharides, the glycan precursors employed in protein asparagine (N)-glycosylation. The assembly of dolichol-linked oligosaccharides begins on the cytosolic side of the endoplasmic reticulum membrane and finishes in its lumen. The sequential addition of sugars to dolichol pyrophosphate produces dolichol-linked oligosaccharides containing fourteen sugars, including two GlcNAcs, nine mannoses and three glucoses. Once assembled, the oligosaccharide is transferred from the lipid to nascent proteins by oligosaccharyltransferases. Catalyzes, on the cytoplasmic face of the endoplasmic reticulum, the addition of the fourth and fifth mannose residues to the dolichol-linked oligosaccharide chain, to produce Man(5)GlcNAc(2)-PP-dolichol core oligosaccharide. Man(5)GlcNAc(2)-PP-dolichol is a substrate for ALG3, the following enzyme in the biosynthetic pathway.</text>
</comment>
<comment type="catalytic activity">
    <reaction evidence="2">
        <text>an alpha-D-Man-(1-&gt;3)-[alpha-D-Man-(1-&gt;6)]-beta-D-Man-(1-&gt;4)-beta-D-GlcNAc-(1-&gt;4)-alpha-D-GlcNAc-diphospho-di-trans,poly-cis-dolichol + 2 GDP-alpha-D-mannose = an alpha-D-Man-(1-&gt;2)-alpha-D-Man-(1-&gt;2)-alpha-D-Man-(1-&gt;3)-[alpha-D-Man-(1-&gt;6)]-beta-D-Man-(1-&gt;4)-beta-D-GlcNAc-(1-&gt;4)-alpha-D-GlcNAc-diphospho-di-trans,poly-cis-dolichol + 2 GDP + 2 H(+)</text>
        <dbReference type="Rhea" id="RHEA:29523"/>
        <dbReference type="Rhea" id="RHEA-COMP:19515"/>
        <dbReference type="Rhea" id="RHEA-COMP:19516"/>
        <dbReference type="ChEBI" id="CHEBI:15378"/>
        <dbReference type="ChEBI" id="CHEBI:57527"/>
        <dbReference type="ChEBI" id="CHEBI:58189"/>
        <dbReference type="ChEBI" id="CHEBI:132511"/>
        <dbReference type="ChEBI" id="CHEBI:132515"/>
        <dbReference type="EC" id="2.4.1.131"/>
    </reaction>
    <physiologicalReaction direction="left-to-right" evidence="2">
        <dbReference type="Rhea" id="RHEA:29524"/>
    </physiologicalReaction>
</comment>
<comment type="pathway">
    <text evidence="2">Protein modification; protein glycosylation.</text>
</comment>
<comment type="subcellular location">
    <subcellularLocation>
        <location evidence="2">Endoplasmic reticulum membrane</location>
        <topology evidence="1">Single-pass membrane protein</topology>
    </subcellularLocation>
</comment>
<comment type="similarity">
    <text evidence="4">Belongs to the glycosyltransferase group 1 family. Glycosyltransferase 4 subfamily.</text>
</comment>